<comment type="function">
    <text evidence="1">Required for the morphogenesis and for the elongation of the flagellar filament by facilitating polymerization of the flagellin monomers at the tip of growing filament. Forms a capping structure, which prevents flagellin subunits (transported through the central channel of the flagellum) from leaking out without polymerization at the distal end (By similarity).</text>
</comment>
<comment type="subunit">
    <text evidence="1">Homopentamer.</text>
</comment>
<comment type="subcellular location">
    <subcellularLocation>
        <location>Secreted</location>
    </subcellularLocation>
    <subcellularLocation>
        <location>Bacterial flagellum</location>
    </subcellularLocation>
</comment>
<comment type="similarity">
    <text evidence="3">Belongs to the FliD family.</text>
</comment>
<dbReference type="EMBL" id="AE000512">
    <property type="protein sequence ID" value="AAD36199.1"/>
    <property type="molecule type" value="Genomic_DNA"/>
</dbReference>
<dbReference type="PIR" id="H72292">
    <property type="entry name" value="H72292"/>
</dbReference>
<dbReference type="RefSeq" id="NP_228929.1">
    <property type="nucleotide sequence ID" value="NC_000853.1"/>
</dbReference>
<dbReference type="RefSeq" id="WP_004080294.1">
    <property type="nucleotide sequence ID" value="NC_000853.1"/>
</dbReference>
<dbReference type="FunCoup" id="Q9X0K7">
    <property type="interactions" value="40"/>
</dbReference>
<dbReference type="STRING" id="243274.TM_1123"/>
<dbReference type="PaxDb" id="243274-THEMA_08730"/>
<dbReference type="DNASU" id="898641"/>
<dbReference type="EnsemblBacteria" id="AAD36199">
    <property type="protein sequence ID" value="AAD36199"/>
    <property type="gene ID" value="TM_1123"/>
</dbReference>
<dbReference type="KEGG" id="tma:TM1123"/>
<dbReference type="KEGG" id="tmi:THEMA_08730"/>
<dbReference type="KEGG" id="tmm:Tmari_1129"/>
<dbReference type="KEGG" id="tmw:THMA_1146"/>
<dbReference type="eggNOG" id="COG1345">
    <property type="taxonomic scope" value="Bacteria"/>
</dbReference>
<dbReference type="InParanoid" id="Q9X0K7"/>
<dbReference type="OrthoDB" id="41230at2"/>
<dbReference type="Proteomes" id="UP000008183">
    <property type="component" value="Chromosome"/>
</dbReference>
<dbReference type="GO" id="GO:0009421">
    <property type="term" value="C:bacterial-type flagellum filament cap"/>
    <property type="evidence" value="ECO:0000318"/>
    <property type="project" value="GO_Central"/>
</dbReference>
<dbReference type="GO" id="GO:0009424">
    <property type="term" value="C:bacterial-type flagellum hook"/>
    <property type="evidence" value="ECO:0007669"/>
    <property type="project" value="InterPro"/>
</dbReference>
<dbReference type="GO" id="GO:0005576">
    <property type="term" value="C:extracellular region"/>
    <property type="evidence" value="ECO:0007669"/>
    <property type="project" value="UniProtKB-SubCell"/>
</dbReference>
<dbReference type="GO" id="GO:0071973">
    <property type="term" value="P:bacterial-type flagellum-dependent cell motility"/>
    <property type="evidence" value="ECO:0000318"/>
    <property type="project" value="GO_Central"/>
</dbReference>
<dbReference type="GO" id="GO:0007155">
    <property type="term" value="P:cell adhesion"/>
    <property type="evidence" value="ECO:0007669"/>
    <property type="project" value="InterPro"/>
</dbReference>
<dbReference type="Gene3D" id="3.30.70.2120">
    <property type="match status" value="1"/>
</dbReference>
<dbReference type="InterPro" id="IPR010810">
    <property type="entry name" value="Flagellin_hook_IN_motif"/>
</dbReference>
<dbReference type="InterPro" id="IPR040026">
    <property type="entry name" value="FliD"/>
</dbReference>
<dbReference type="InterPro" id="IPR010809">
    <property type="entry name" value="FliD_C"/>
</dbReference>
<dbReference type="InterPro" id="IPR003481">
    <property type="entry name" value="FliD_N"/>
</dbReference>
<dbReference type="PANTHER" id="PTHR30288">
    <property type="entry name" value="FLAGELLAR CAP/ASSEMBLY PROTEIN FLID"/>
    <property type="match status" value="1"/>
</dbReference>
<dbReference type="PANTHER" id="PTHR30288:SF0">
    <property type="entry name" value="FLAGELLAR HOOK-ASSOCIATED PROTEIN 2"/>
    <property type="match status" value="1"/>
</dbReference>
<dbReference type="Pfam" id="PF07196">
    <property type="entry name" value="Flagellin_IN"/>
    <property type="match status" value="2"/>
</dbReference>
<dbReference type="Pfam" id="PF07195">
    <property type="entry name" value="FliD_C"/>
    <property type="match status" value="1"/>
</dbReference>
<dbReference type="Pfam" id="PF02465">
    <property type="entry name" value="FliD_N"/>
    <property type="match status" value="1"/>
</dbReference>
<organism>
    <name type="scientific">Thermotoga maritima (strain ATCC 43589 / DSM 3109 / JCM 10099 / NBRC 100826 / MSB8)</name>
    <dbReference type="NCBI Taxonomy" id="243274"/>
    <lineage>
        <taxon>Bacteria</taxon>
        <taxon>Thermotogati</taxon>
        <taxon>Thermotogota</taxon>
        <taxon>Thermotogae</taxon>
        <taxon>Thermotogales</taxon>
        <taxon>Thermotogaceae</taxon>
        <taxon>Thermotoga</taxon>
    </lineage>
</organism>
<sequence>MDLSKIASTINMRYYSQLGGFQVGGAVSGLDTQSIINAILEAESQPLQNLTEKYEKYELMQEAYTEVKTKLREFRDLVYSFKLQSTVVQKTAVSSSSLLSAEASSVAVTGVYHVKIVQTATYTTLAGASEVVPPPDSTKTFGELDYMYTPQEGTVRLYNNETGNYVEVQVLSTDTIDDIVSKLNSALSSAGITGSVSYDTSTGKISITSDKNFSLVDITGNFTKVFHLDEASLNYSGGNYSFTSTASVSGLSTAKTLQQIATYTSKTIISGKVKINGVEIDVDQNDTLSSLIEKINDSEAGVTASYDYHANRVVIISKTSGPEAITLEDTYGTGLFSLLGIENHSLYVGQKAHLQISMDGTNWADVYSDTNDVEYNGVTFHISGMTSETITVDVRVDTDAIVEKIKEFVDKWNETMDYLNEKLTEESITDKDEEEMTEEEKMKGVLKGDDLLEEIFSRLRGFITYKAEGDINYLWELGISTGDIGTGYENMMKGHLEVDEEKLKQIVEEDPNKVWEFFGGENGFATQLDDYLWELVKFNGRIDQVAGISGRIEREQRFLATQIASWIERLSKREQELWRKFSVMEEVISQLQSQGSWISQALQGSSNK</sequence>
<feature type="chain" id="PRO_0000177025" description="Flagellar hook-associated protein 2">
    <location>
        <begin position="1"/>
        <end position="608"/>
    </location>
</feature>
<feature type="coiled-coil region" evidence="2">
    <location>
        <begin position="47"/>
        <end position="75"/>
    </location>
</feature>
<protein>
    <recommendedName>
        <fullName>Flagellar hook-associated protein 2</fullName>
        <shortName>HAP2</shortName>
    </recommendedName>
    <alternativeName>
        <fullName>Filament cap protein</fullName>
    </alternativeName>
    <alternativeName>
        <fullName>Flagellar cap protein</fullName>
    </alternativeName>
</protein>
<accession>Q9X0K7</accession>
<proteinExistence type="inferred from homology"/>
<gene>
    <name type="primary">fliD</name>
    <name type="ordered locus">TM_1123</name>
</gene>
<reference key="1">
    <citation type="journal article" date="1999" name="Nature">
        <title>Evidence for lateral gene transfer between Archaea and Bacteria from genome sequence of Thermotoga maritima.</title>
        <authorList>
            <person name="Nelson K.E."/>
            <person name="Clayton R.A."/>
            <person name="Gill S.R."/>
            <person name="Gwinn M.L."/>
            <person name="Dodson R.J."/>
            <person name="Haft D.H."/>
            <person name="Hickey E.K."/>
            <person name="Peterson J.D."/>
            <person name="Nelson W.C."/>
            <person name="Ketchum K.A."/>
            <person name="McDonald L.A."/>
            <person name="Utterback T.R."/>
            <person name="Malek J.A."/>
            <person name="Linher K.D."/>
            <person name="Garrett M.M."/>
            <person name="Stewart A.M."/>
            <person name="Cotton M.D."/>
            <person name="Pratt M.S."/>
            <person name="Phillips C.A."/>
            <person name="Richardson D.L."/>
            <person name="Heidelberg J.F."/>
            <person name="Sutton G.G."/>
            <person name="Fleischmann R.D."/>
            <person name="Eisen J.A."/>
            <person name="White O."/>
            <person name="Salzberg S.L."/>
            <person name="Smith H.O."/>
            <person name="Venter J.C."/>
            <person name="Fraser C.M."/>
        </authorList>
    </citation>
    <scope>NUCLEOTIDE SEQUENCE [LARGE SCALE GENOMIC DNA]</scope>
    <source>
        <strain>ATCC 43589 / DSM 3109 / JCM 10099 / NBRC 100826 / MSB8</strain>
    </source>
</reference>
<name>FLID_THEMA</name>
<keyword id="KW-0975">Bacterial flagellum</keyword>
<keyword id="KW-0175">Coiled coil</keyword>
<keyword id="KW-1185">Reference proteome</keyword>
<keyword id="KW-0964">Secreted</keyword>
<evidence type="ECO:0000250" key="1"/>
<evidence type="ECO:0000255" key="2"/>
<evidence type="ECO:0000305" key="3"/>